<name>KDSA_CHLT2</name>
<organism>
    <name type="scientific">Chlamydia trachomatis serovar L2 (strain ATCC VR-902B / DSM 19102 / 434/Bu)</name>
    <dbReference type="NCBI Taxonomy" id="471472"/>
    <lineage>
        <taxon>Bacteria</taxon>
        <taxon>Pseudomonadati</taxon>
        <taxon>Chlamydiota</taxon>
        <taxon>Chlamydiia</taxon>
        <taxon>Chlamydiales</taxon>
        <taxon>Chlamydiaceae</taxon>
        <taxon>Chlamydia/Chlamydophila group</taxon>
        <taxon>Chlamydia</taxon>
    </lineage>
</organism>
<evidence type="ECO:0000255" key="1">
    <source>
        <dbReference type="HAMAP-Rule" id="MF_00056"/>
    </source>
</evidence>
<evidence type="ECO:0000305" key="2"/>
<comment type="catalytic activity">
    <reaction evidence="1">
        <text>D-arabinose 5-phosphate + phosphoenolpyruvate + H2O = 3-deoxy-alpha-D-manno-2-octulosonate-8-phosphate + phosphate</text>
        <dbReference type="Rhea" id="RHEA:14053"/>
        <dbReference type="ChEBI" id="CHEBI:15377"/>
        <dbReference type="ChEBI" id="CHEBI:43474"/>
        <dbReference type="ChEBI" id="CHEBI:57693"/>
        <dbReference type="ChEBI" id="CHEBI:58702"/>
        <dbReference type="ChEBI" id="CHEBI:85985"/>
        <dbReference type="EC" id="2.5.1.55"/>
    </reaction>
</comment>
<comment type="pathway">
    <text evidence="1">Carbohydrate biosynthesis; 3-deoxy-D-manno-octulosonate biosynthesis; 3-deoxy-D-manno-octulosonate from D-ribulose 5-phosphate: step 2/3.</text>
</comment>
<comment type="pathway">
    <text evidence="1">Bacterial outer membrane biogenesis; lipopolysaccharide biosynthesis.</text>
</comment>
<comment type="subcellular location">
    <subcellularLocation>
        <location evidence="1">Cytoplasm</location>
    </subcellularLocation>
</comment>
<comment type="similarity">
    <text evidence="1">Belongs to the KdsA family.</text>
</comment>
<proteinExistence type="inferred from homology"/>
<accession>B0B8N1</accession>
<accession>O84662</accession>
<accession>P77849</accession>
<sequence length="269" mass="29645">MFPENKMLLIAGPCVIEDNSVFETARRLKEIVAPYASSVHWIFKSSYDKANRSSVHNYRGPGLRLGLQTLAKIKEELDVEILTDVHSPDEAREAAKVCDIIQVPAFLCRQTDLLVTAGETQAIVNIKKGQFLSPWEMQGPIDKVLSTGNNKIILTERGCSFGYNNLVSDMRSIEVLRRFGFPVVFDGTHSVQLPGALHSQSGGQTEFIPVLTRSAIAAGVQGLFIETHPNPSSALSDAASMLSLKDLERLLPAWVQLFTYIQEMDAVSV</sequence>
<reference key="1">
    <citation type="journal article" date="1997" name="Infect. Immun.">
        <title>Identification, characterization, and developmental regulation of Chlamydia trachomatis 3-deoxy-D-manno-octulosonate (KDO)-8-phosphate synthetase and CMP-KDO synthetase.</title>
        <authorList>
            <person name="Wylie J.L."/>
            <person name="Iliffe E.R."/>
            <person name="Wang L.L."/>
            <person name="McClarty G."/>
        </authorList>
    </citation>
    <scope>NUCLEOTIDE SEQUENCE [GENOMIC DNA]</scope>
</reference>
<reference key="2">
    <citation type="journal article" date="2008" name="Genome Res.">
        <title>Chlamydia trachomatis: genome sequence analysis of lymphogranuloma venereum isolates.</title>
        <authorList>
            <person name="Thomson N.R."/>
            <person name="Holden M.T.G."/>
            <person name="Carder C."/>
            <person name="Lennard N."/>
            <person name="Lockey S.J."/>
            <person name="Marsh P."/>
            <person name="Skipp P."/>
            <person name="O'Connor C.D."/>
            <person name="Goodhead I."/>
            <person name="Norbertzcak H."/>
            <person name="Harris B."/>
            <person name="Ormond D."/>
            <person name="Rance R."/>
            <person name="Quail M.A."/>
            <person name="Parkhill J."/>
            <person name="Stephens R.S."/>
            <person name="Clarke I.N."/>
        </authorList>
    </citation>
    <scope>NUCLEOTIDE SEQUENCE [LARGE SCALE GENOMIC DNA]</scope>
    <source>
        <strain>ATCC VR-902B / DSM 19102 / 434/Bu</strain>
    </source>
</reference>
<dbReference type="EC" id="2.5.1.55" evidence="1"/>
<dbReference type="EMBL" id="U72493">
    <property type="protein sequence ID" value="AAB17556.1"/>
    <property type="molecule type" value="Genomic_DNA"/>
</dbReference>
<dbReference type="EMBL" id="AM884176">
    <property type="protein sequence ID" value="CAP03468.1"/>
    <property type="molecule type" value="Genomic_DNA"/>
</dbReference>
<dbReference type="RefSeq" id="WP_009873271.1">
    <property type="nucleotide sequence ID" value="NC_010287.1"/>
</dbReference>
<dbReference type="RefSeq" id="YP_001654115.1">
    <property type="nucleotide sequence ID" value="NC_010287.1"/>
</dbReference>
<dbReference type="SMR" id="B0B8N1"/>
<dbReference type="KEGG" id="ctb:CTL0024"/>
<dbReference type="PATRIC" id="fig|471472.4.peg.27"/>
<dbReference type="HOGENOM" id="CLU_036666_0_0_0"/>
<dbReference type="UniPathway" id="UPA00030"/>
<dbReference type="UniPathway" id="UPA00357">
    <property type="reaction ID" value="UER00474"/>
</dbReference>
<dbReference type="Proteomes" id="UP001154402">
    <property type="component" value="Chromosome"/>
</dbReference>
<dbReference type="GO" id="GO:0005737">
    <property type="term" value="C:cytoplasm"/>
    <property type="evidence" value="ECO:0007669"/>
    <property type="project" value="UniProtKB-SubCell"/>
</dbReference>
<dbReference type="GO" id="GO:0008676">
    <property type="term" value="F:3-deoxy-8-phosphooctulonate synthase activity"/>
    <property type="evidence" value="ECO:0007669"/>
    <property type="project" value="UniProtKB-UniRule"/>
</dbReference>
<dbReference type="GO" id="GO:0019294">
    <property type="term" value="P:keto-3-deoxy-D-manno-octulosonic acid biosynthetic process"/>
    <property type="evidence" value="ECO:0007669"/>
    <property type="project" value="UniProtKB-UniRule"/>
</dbReference>
<dbReference type="Gene3D" id="3.20.20.70">
    <property type="entry name" value="Aldolase class I"/>
    <property type="match status" value="1"/>
</dbReference>
<dbReference type="HAMAP" id="MF_00056">
    <property type="entry name" value="KDO8P_synth"/>
    <property type="match status" value="1"/>
</dbReference>
<dbReference type="InterPro" id="IPR013785">
    <property type="entry name" value="Aldolase_TIM"/>
</dbReference>
<dbReference type="InterPro" id="IPR006218">
    <property type="entry name" value="DAHP1/KDSA"/>
</dbReference>
<dbReference type="InterPro" id="IPR006269">
    <property type="entry name" value="KDO8P_synthase"/>
</dbReference>
<dbReference type="NCBIfam" id="TIGR01362">
    <property type="entry name" value="KDO8P_synth"/>
    <property type="match status" value="1"/>
</dbReference>
<dbReference type="NCBIfam" id="NF003543">
    <property type="entry name" value="PRK05198.1"/>
    <property type="match status" value="1"/>
</dbReference>
<dbReference type="PANTHER" id="PTHR21057">
    <property type="entry name" value="PHOSPHO-2-DEHYDRO-3-DEOXYHEPTONATE ALDOLASE"/>
    <property type="match status" value="1"/>
</dbReference>
<dbReference type="Pfam" id="PF00793">
    <property type="entry name" value="DAHP_synth_1"/>
    <property type="match status" value="1"/>
</dbReference>
<dbReference type="SUPFAM" id="SSF51569">
    <property type="entry name" value="Aldolase"/>
    <property type="match status" value="1"/>
</dbReference>
<feature type="chain" id="PRO_1000091804" description="2-dehydro-3-deoxyphosphooctonate aldolase">
    <location>
        <begin position="1"/>
        <end position="269"/>
    </location>
</feature>
<feature type="sequence conflict" description="In Ref. 1; AAB17556." evidence="2" ref="1">
    <original>A</original>
    <variation>G</variation>
    <location>
        <position position="33"/>
    </location>
</feature>
<feature type="sequence conflict" description="In Ref. 1; AAB17556." evidence="2" ref="1">
    <original>F</original>
    <variation>S</variation>
    <location>
        <position position="185"/>
    </location>
</feature>
<feature type="sequence conflict" description="In Ref. 1; AAB17556." evidence="2" ref="1">
    <original>I</original>
    <variation>K</variation>
    <location>
        <position position="225"/>
    </location>
</feature>
<keyword id="KW-0963">Cytoplasm</keyword>
<keyword id="KW-0448">Lipopolysaccharide biosynthesis</keyword>
<keyword id="KW-0808">Transferase</keyword>
<protein>
    <recommendedName>
        <fullName evidence="1">2-dehydro-3-deoxyphosphooctonate aldolase</fullName>
        <ecNumber evidence="1">2.5.1.55</ecNumber>
    </recommendedName>
    <alternativeName>
        <fullName evidence="1">3-deoxy-D-manno-octulosonic acid 8-phosphate synthase</fullName>
    </alternativeName>
    <alternativeName>
        <fullName evidence="1">KDO-8-phosphate synthase</fullName>
        <shortName evidence="1">KDO 8-P synthase</shortName>
        <shortName evidence="1">KDOPS</shortName>
    </alternativeName>
    <alternativeName>
        <fullName evidence="1">Phospho-2-dehydro-3-deoxyoctonate aldolase</fullName>
    </alternativeName>
</protein>
<gene>
    <name evidence="1" type="primary">kdsA</name>
    <name type="ordered locus">CTL0024</name>
</gene>